<name>IPYR_HAEIN</name>
<comment type="function">
    <text evidence="1">Catalyzes the hydrolysis of inorganic pyrophosphate (PPi) forming two phosphate ions.</text>
</comment>
<comment type="catalytic activity">
    <reaction evidence="1">
        <text>diphosphate + H2O = 2 phosphate + H(+)</text>
        <dbReference type="Rhea" id="RHEA:24576"/>
        <dbReference type="ChEBI" id="CHEBI:15377"/>
        <dbReference type="ChEBI" id="CHEBI:15378"/>
        <dbReference type="ChEBI" id="CHEBI:33019"/>
        <dbReference type="ChEBI" id="CHEBI:43474"/>
        <dbReference type="EC" id="3.6.1.1"/>
    </reaction>
</comment>
<comment type="cofactor">
    <cofactor evidence="1">
        <name>Mg(2+)</name>
        <dbReference type="ChEBI" id="CHEBI:18420"/>
    </cofactor>
</comment>
<comment type="subunit">
    <text evidence="1">Homohexamer.</text>
</comment>
<comment type="subcellular location">
    <subcellularLocation>
        <location evidence="1">Cytoplasm</location>
    </subcellularLocation>
</comment>
<comment type="similarity">
    <text evidence="1">Belongs to the PPase family.</text>
</comment>
<evidence type="ECO:0000255" key="1">
    <source>
        <dbReference type="HAMAP-Rule" id="MF_00209"/>
    </source>
</evidence>
<organism>
    <name type="scientific">Haemophilus influenzae (strain ATCC 51907 / DSM 11121 / KW20 / Rd)</name>
    <dbReference type="NCBI Taxonomy" id="71421"/>
    <lineage>
        <taxon>Bacteria</taxon>
        <taxon>Pseudomonadati</taxon>
        <taxon>Pseudomonadota</taxon>
        <taxon>Gammaproteobacteria</taxon>
        <taxon>Pasteurellales</taxon>
        <taxon>Pasteurellaceae</taxon>
        <taxon>Haemophilus</taxon>
    </lineage>
</organism>
<gene>
    <name evidence="1" type="primary">ppa</name>
    <name type="ordered locus">HI_0124</name>
</gene>
<feature type="chain" id="PRO_0000137500" description="Inorganic pyrophosphatase">
    <location>
        <begin position="1"/>
        <end position="176"/>
    </location>
</feature>
<feature type="binding site" evidence="1">
    <location>
        <position position="31"/>
    </location>
    <ligand>
        <name>substrate</name>
    </ligand>
</feature>
<feature type="binding site" evidence="1">
    <location>
        <position position="45"/>
    </location>
    <ligand>
        <name>substrate</name>
    </ligand>
</feature>
<feature type="binding site" evidence="1">
    <location>
        <position position="57"/>
    </location>
    <ligand>
        <name>substrate</name>
    </ligand>
</feature>
<feature type="binding site" evidence="1">
    <location>
        <position position="67"/>
    </location>
    <ligand>
        <name>Mg(2+)</name>
        <dbReference type="ChEBI" id="CHEBI:18420"/>
        <label>1</label>
    </ligand>
</feature>
<feature type="binding site" evidence="1">
    <location>
        <position position="72"/>
    </location>
    <ligand>
        <name>Mg(2+)</name>
        <dbReference type="ChEBI" id="CHEBI:18420"/>
        <label>1</label>
    </ligand>
</feature>
<feature type="binding site" evidence="1">
    <location>
        <position position="72"/>
    </location>
    <ligand>
        <name>Mg(2+)</name>
        <dbReference type="ChEBI" id="CHEBI:18420"/>
        <label>2</label>
    </ligand>
</feature>
<feature type="binding site" evidence="1">
    <location>
        <position position="104"/>
    </location>
    <ligand>
        <name>Mg(2+)</name>
        <dbReference type="ChEBI" id="CHEBI:18420"/>
        <label>1</label>
    </ligand>
</feature>
<feature type="binding site" evidence="1">
    <location>
        <position position="142"/>
    </location>
    <ligand>
        <name>substrate</name>
    </ligand>
</feature>
<keyword id="KW-0963">Cytoplasm</keyword>
<keyword id="KW-0378">Hydrolase</keyword>
<keyword id="KW-0460">Magnesium</keyword>
<keyword id="KW-0479">Metal-binding</keyword>
<keyword id="KW-1185">Reference proteome</keyword>
<sequence length="176" mass="19725">MADFNQILTPGDVDAGIINVVNEIPEGSCHKIEWNRKVAAFQLDRVEPAIFAKPTNYGFIPQTLDEDGDELDVLLITRQPLATGVFLEAKVIGVMKFVDDGEVDDKIVCVPADDRDTGNAYNSLADLPANLIKQIEFHFNNYKALKKPGSTKVTHWGDVEEAKEVIRESIKRWNER</sequence>
<accession>P44529</accession>
<proteinExistence type="inferred from homology"/>
<dbReference type="EC" id="3.6.1.1" evidence="1"/>
<dbReference type="EMBL" id="L42023">
    <property type="protein sequence ID" value="AAC21798.1"/>
    <property type="molecule type" value="Genomic_DNA"/>
</dbReference>
<dbReference type="PIR" id="G64049">
    <property type="entry name" value="G64049"/>
</dbReference>
<dbReference type="RefSeq" id="NP_438296.1">
    <property type="nucleotide sequence ID" value="NC_000907.1"/>
</dbReference>
<dbReference type="SMR" id="P44529"/>
<dbReference type="STRING" id="71421.HI_0124"/>
<dbReference type="EnsemblBacteria" id="AAC21798">
    <property type="protein sequence ID" value="AAC21798"/>
    <property type="gene ID" value="HI_0124"/>
</dbReference>
<dbReference type="KEGG" id="hin:HI_0124"/>
<dbReference type="PATRIC" id="fig|71421.8.peg.128"/>
<dbReference type="eggNOG" id="COG0221">
    <property type="taxonomic scope" value="Bacteria"/>
</dbReference>
<dbReference type="HOGENOM" id="CLU_073198_1_2_6"/>
<dbReference type="OrthoDB" id="5187599at2"/>
<dbReference type="PhylomeDB" id="P44529"/>
<dbReference type="BioCyc" id="HINF71421:G1GJ1-137-MONOMER"/>
<dbReference type="Proteomes" id="UP000000579">
    <property type="component" value="Chromosome"/>
</dbReference>
<dbReference type="GO" id="GO:0005829">
    <property type="term" value="C:cytosol"/>
    <property type="evidence" value="ECO:0000318"/>
    <property type="project" value="GO_Central"/>
</dbReference>
<dbReference type="GO" id="GO:0004427">
    <property type="term" value="F:inorganic diphosphate phosphatase activity"/>
    <property type="evidence" value="ECO:0000318"/>
    <property type="project" value="GO_Central"/>
</dbReference>
<dbReference type="GO" id="GO:0000287">
    <property type="term" value="F:magnesium ion binding"/>
    <property type="evidence" value="ECO:0000318"/>
    <property type="project" value="GO_Central"/>
</dbReference>
<dbReference type="GO" id="GO:0006796">
    <property type="term" value="P:phosphate-containing compound metabolic process"/>
    <property type="evidence" value="ECO:0000318"/>
    <property type="project" value="GO_Central"/>
</dbReference>
<dbReference type="CDD" id="cd00412">
    <property type="entry name" value="pyrophosphatase"/>
    <property type="match status" value="1"/>
</dbReference>
<dbReference type="FunFam" id="3.90.80.10:FF:000006">
    <property type="entry name" value="Inorganic pyrophosphatase"/>
    <property type="match status" value="1"/>
</dbReference>
<dbReference type="Gene3D" id="3.90.80.10">
    <property type="entry name" value="Inorganic pyrophosphatase"/>
    <property type="match status" value="1"/>
</dbReference>
<dbReference type="HAMAP" id="MF_00209">
    <property type="entry name" value="Inorganic_PPase"/>
    <property type="match status" value="1"/>
</dbReference>
<dbReference type="InterPro" id="IPR008162">
    <property type="entry name" value="Pyrophosphatase"/>
</dbReference>
<dbReference type="InterPro" id="IPR036649">
    <property type="entry name" value="Pyrophosphatase_sf"/>
</dbReference>
<dbReference type="PANTHER" id="PTHR10286">
    <property type="entry name" value="INORGANIC PYROPHOSPHATASE"/>
    <property type="match status" value="1"/>
</dbReference>
<dbReference type="Pfam" id="PF00719">
    <property type="entry name" value="Pyrophosphatase"/>
    <property type="match status" value="1"/>
</dbReference>
<dbReference type="SUPFAM" id="SSF50324">
    <property type="entry name" value="Inorganic pyrophosphatase"/>
    <property type="match status" value="1"/>
</dbReference>
<dbReference type="PROSITE" id="PS00387">
    <property type="entry name" value="PPASE"/>
    <property type="match status" value="1"/>
</dbReference>
<reference key="1">
    <citation type="journal article" date="1995" name="Science">
        <title>Whole-genome random sequencing and assembly of Haemophilus influenzae Rd.</title>
        <authorList>
            <person name="Fleischmann R.D."/>
            <person name="Adams M.D."/>
            <person name="White O."/>
            <person name="Clayton R.A."/>
            <person name="Kirkness E.F."/>
            <person name="Kerlavage A.R."/>
            <person name="Bult C.J."/>
            <person name="Tomb J.-F."/>
            <person name="Dougherty B.A."/>
            <person name="Merrick J.M."/>
            <person name="McKenney K."/>
            <person name="Sutton G.G."/>
            <person name="FitzHugh W."/>
            <person name="Fields C.A."/>
            <person name="Gocayne J.D."/>
            <person name="Scott J.D."/>
            <person name="Shirley R."/>
            <person name="Liu L.-I."/>
            <person name="Glodek A."/>
            <person name="Kelley J.M."/>
            <person name="Weidman J.F."/>
            <person name="Phillips C.A."/>
            <person name="Spriggs T."/>
            <person name="Hedblom E."/>
            <person name="Cotton M.D."/>
            <person name="Utterback T.R."/>
            <person name="Hanna M.C."/>
            <person name="Nguyen D.T."/>
            <person name="Saudek D.M."/>
            <person name="Brandon R.C."/>
            <person name="Fine L.D."/>
            <person name="Fritchman J.L."/>
            <person name="Fuhrmann J.L."/>
            <person name="Geoghagen N.S.M."/>
            <person name="Gnehm C.L."/>
            <person name="McDonald L.A."/>
            <person name="Small K.V."/>
            <person name="Fraser C.M."/>
            <person name="Smith H.O."/>
            <person name="Venter J.C."/>
        </authorList>
    </citation>
    <scope>NUCLEOTIDE SEQUENCE [LARGE SCALE GENOMIC DNA]</scope>
    <source>
        <strain>ATCC 51907 / DSM 11121 / KW20 / Rd</strain>
    </source>
</reference>
<protein>
    <recommendedName>
        <fullName evidence="1">Inorganic pyrophosphatase</fullName>
        <ecNumber evidence="1">3.6.1.1</ecNumber>
    </recommendedName>
    <alternativeName>
        <fullName evidence="1">Pyrophosphate phospho-hydrolase</fullName>
        <shortName evidence="1">PPase</shortName>
    </alternativeName>
</protein>